<gene>
    <name evidence="1" type="primary">pyrB</name>
    <name type="ordered locus">BA_4028</name>
    <name type="ordered locus">GBAA_4028</name>
    <name type="ordered locus">BAS3740</name>
</gene>
<sequence length="304" mass="34722">MSHLLTMSELSEVEISEILKDAEDFANGKESKTTEQTFVANLFFENSTRTRFSFEVAEKRLGLDVLNFSADASSVQKGETLYDTIRTLESIGTKAVVIRHEQDRYFDELKDQVNIPILNAGDGCGNHPTQCLLDLLTIKQEFGRFEGLKIAIVGDVRHSRVARSNAEALTKLGATIYFASPEEWKDEDNTFGTYKPLDELVPEVDVMMLLRVQHERHDHYETDIMKEYHEKHGLTVEREKRMKEGSIIMHPAPVNRDVEIASELVECERSRIFKQMENGVYVRMAVLKRALPNVLGGMKHELFV</sequence>
<organism>
    <name type="scientific">Bacillus anthracis</name>
    <dbReference type="NCBI Taxonomy" id="1392"/>
    <lineage>
        <taxon>Bacteria</taxon>
        <taxon>Bacillati</taxon>
        <taxon>Bacillota</taxon>
        <taxon>Bacilli</taxon>
        <taxon>Bacillales</taxon>
        <taxon>Bacillaceae</taxon>
        <taxon>Bacillus</taxon>
        <taxon>Bacillus cereus group</taxon>
    </lineage>
</organism>
<reference key="1">
    <citation type="journal article" date="2003" name="Nature">
        <title>The genome sequence of Bacillus anthracis Ames and comparison to closely related bacteria.</title>
        <authorList>
            <person name="Read T.D."/>
            <person name="Peterson S.N."/>
            <person name="Tourasse N.J."/>
            <person name="Baillie L.W."/>
            <person name="Paulsen I.T."/>
            <person name="Nelson K.E."/>
            <person name="Tettelin H."/>
            <person name="Fouts D.E."/>
            <person name="Eisen J.A."/>
            <person name="Gill S.R."/>
            <person name="Holtzapple E.K."/>
            <person name="Okstad O.A."/>
            <person name="Helgason E."/>
            <person name="Rilstone J."/>
            <person name="Wu M."/>
            <person name="Kolonay J.F."/>
            <person name="Beanan M.J."/>
            <person name="Dodson R.J."/>
            <person name="Brinkac L.M."/>
            <person name="Gwinn M.L."/>
            <person name="DeBoy R.T."/>
            <person name="Madpu R."/>
            <person name="Daugherty S.C."/>
            <person name="Durkin A.S."/>
            <person name="Haft D.H."/>
            <person name="Nelson W.C."/>
            <person name="Peterson J.D."/>
            <person name="Pop M."/>
            <person name="Khouri H.M."/>
            <person name="Radune D."/>
            <person name="Benton J.L."/>
            <person name="Mahamoud Y."/>
            <person name="Jiang L."/>
            <person name="Hance I.R."/>
            <person name="Weidman J.F."/>
            <person name="Berry K.J."/>
            <person name="Plaut R.D."/>
            <person name="Wolf A.M."/>
            <person name="Watkins K.L."/>
            <person name="Nierman W.C."/>
            <person name="Hazen A."/>
            <person name="Cline R.T."/>
            <person name="Redmond C."/>
            <person name="Thwaite J.E."/>
            <person name="White O."/>
            <person name="Salzberg S.L."/>
            <person name="Thomason B."/>
            <person name="Friedlander A.M."/>
            <person name="Koehler T.M."/>
            <person name="Hanna P.C."/>
            <person name="Kolstoe A.-B."/>
            <person name="Fraser C.M."/>
        </authorList>
    </citation>
    <scope>NUCLEOTIDE SEQUENCE [LARGE SCALE GENOMIC DNA]</scope>
    <source>
        <strain>Ames / isolate Porton</strain>
    </source>
</reference>
<reference key="2">
    <citation type="journal article" date="2009" name="J. Bacteriol.">
        <title>The complete genome sequence of Bacillus anthracis Ames 'Ancestor'.</title>
        <authorList>
            <person name="Ravel J."/>
            <person name="Jiang L."/>
            <person name="Stanley S.T."/>
            <person name="Wilson M.R."/>
            <person name="Decker R.S."/>
            <person name="Read T.D."/>
            <person name="Worsham P."/>
            <person name="Keim P.S."/>
            <person name="Salzberg S.L."/>
            <person name="Fraser-Liggett C.M."/>
            <person name="Rasko D.A."/>
        </authorList>
    </citation>
    <scope>NUCLEOTIDE SEQUENCE [LARGE SCALE GENOMIC DNA]</scope>
    <source>
        <strain>Ames ancestor</strain>
    </source>
</reference>
<reference key="3">
    <citation type="submission" date="2004-01" db="EMBL/GenBank/DDBJ databases">
        <title>Complete genome sequence of Bacillus anthracis Sterne.</title>
        <authorList>
            <person name="Brettin T.S."/>
            <person name="Bruce D."/>
            <person name="Challacombe J.F."/>
            <person name="Gilna P."/>
            <person name="Han C."/>
            <person name="Hill K."/>
            <person name="Hitchcock P."/>
            <person name="Jackson P."/>
            <person name="Keim P."/>
            <person name="Longmire J."/>
            <person name="Lucas S."/>
            <person name="Okinaka R."/>
            <person name="Richardson P."/>
            <person name="Rubin E."/>
            <person name="Tice H."/>
        </authorList>
    </citation>
    <scope>NUCLEOTIDE SEQUENCE [LARGE SCALE GENOMIC DNA]</scope>
    <source>
        <strain>Sterne</strain>
    </source>
</reference>
<evidence type="ECO:0000255" key="1">
    <source>
        <dbReference type="HAMAP-Rule" id="MF_00001"/>
    </source>
</evidence>
<comment type="function">
    <text evidence="1">Catalyzes the condensation of carbamoyl phosphate and aspartate to form carbamoyl aspartate and inorganic phosphate, the committed step in the de novo pyrimidine nucleotide biosynthesis pathway.</text>
</comment>
<comment type="catalytic activity">
    <reaction evidence="1">
        <text>carbamoyl phosphate + L-aspartate = N-carbamoyl-L-aspartate + phosphate + H(+)</text>
        <dbReference type="Rhea" id="RHEA:20013"/>
        <dbReference type="ChEBI" id="CHEBI:15378"/>
        <dbReference type="ChEBI" id="CHEBI:29991"/>
        <dbReference type="ChEBI" id="CHEBI:32814"/>
        <dbReference type="ChEBI" id="CHEBI:43474"/>
        <dbReference type="ChEBI" id="CHEBI:58228"/>
        <dbReference type="EC" id="2.1.3.2"/>
    </reaction>
</comment>
<comment type="pathway">
    <text evidence="1">Pyrimidine metabolism; UMP biosynthesis via de novo pathway; (S)-dihydroorotate from bicarbonate: step 2/3.</text>
</comment>
<comment type="subunit">
    <text evidence="1">Heterododecamer (2C3:3R2) of six catalytic PyrB chains organized as two trimers (C3), and six regulatory PyrI chains organized as three dimers (R2).</text>
</comment>
<comment type="similarity">
    <text evidence="1">Belongs to the aspartate/ornithine carbamoyltransferase superfamily. ATCase family.</text>
</comment>
<name>PYRB_BACAN</name>
<protein>
    <recommendedName>
        <fullName evidence="1">Aspartate carbamoyltransferase catalytic subunit</fullName>
        <ecNumber evidence="1">2.1.3.2</ecNumber>
    </recommendedName>
    <alternativeName>
        <fullName evidence="1">Aspartate transcarbamylase</fullName>
        <shortName evidence="1">ATCase</shortName>
    </alternativeName>
</protein>
<feature type="chain" id="PRO_0000113089" description="Aspartate carbamoyltransferase catalytic subunit">
    <location>
        <begin position="1"/>
        <end position="304"/>
    </location>
</feature>
<feature type="binding site" evidence="1">
    <location>
        <position position="49"/>
    </location>
    <ligand>
        <name>carbamoyl phosphate</name>
        <dbReference type="ChEBI" id="CHEBI:58228"/>
    </ligand>
</feature>
<feature type="binding site" evidence="1">
    <location>
        <position position="50"/>
    </location>
    <ligand>
        <name>carbamoyl phosphate</name>
        <dbReference type="ChEBI" id="CHEBI:58228"/>
    </ligand>
</feature>
<feature type="binding site" evidence="1">
    <location>
        <position position="77"/>
    </location>
    <ligand>
        <name>L-aspartate</name>
        <dbReference type="ChEBI" id="CHEBI:29991"/>
    </ligand>
</feature>
<feature type="binding site" evidence="1">
    <location>
        <position position="99"/>
    </location>
    <ligand>
        <name>carbamoyl phosphate</name>
        <dbReference type="ChEBI" id="CHEBI:58228"/>
    </ligand>
</feature>
<feature type="binding site" evidence="1">
    <location>
        <position position="127"/>
    </location>
    <ligand>
        <name>carbamoyl phosphate</name>
        <dbReference type="ChEBI" id="CHEBI:58228"/>
    </ligand>
</feature>
<feature type="binding site" evidence="1">
    <location>
        <position position="130"/>
    </location>
    <ligand>
        <name>carbamoyl phosphate</name>
        <dbReference type="ChEBI" id="CHEBI:58228"/>
    </ligand>
</feature>
<feature type="binding site" evidence="1">
    <location>
        <position position="160"/>
    </location>
    <ligand>
        <name>L-aspartate</name>
        <dbReference type="ChEBI" id="CHEBI:29991"/>
    </ligand>
</feature>
<feature type="binding site" evidence="1">
    <location>
        <position position="211"/>
    </location>
    <ligand>
        <name>L-aspartate</name>
        <dbReference type="ChEBI" id="CHEBI:29991"/>
    </ligand>
</feature>
<feature type="binding site" evidence="1">
    <location>
        <position position="252"/>
    </location>
    <ligand>
        <name>carbamoyl phosphate</name>
        <dbReference type="ChEBI" id="CHEBI:58228"/>
    </ligand>
</feature>
<feature type="binding site" evidence="1">
    <location>
        <position position="253"/>
    </location>
    <ligand>
        <name>carbamoyl phosphate</name>
        <dbReference type="ChEBI" id="CHEBI:58228"/>
    </ligand>
</feature>
<keyword id="KW-0665">Pyrimidine biosynthesis</keyword>
<keyword id="KW-1185">Reference proteome</keyword>
<keyword id="KW-0808">Transferase</keyword>
<accession>Q81WE9</accession>
<accession>Q6HUJ7</accession>
<accession>Q6KNT2</accession>
<dbReference type="EC" id="2.1.3.2" evidence="1"/>
<dbReference type="EMBL" id="AE016879">
    <property type="protein sequence ID" value="AAP27755.1"/>
    <property type="molecule type" value="Genomic_DNA"/>
</dbReference>
<dbReference type="EMBL" id="AE017334">
    <property type="protein sequence ID" value="AAT33145.1"/>
    <property type="molecule type" value="Genomic_DNA"/>
</dbReference>
<dbReference type="EMBL" id="AE017225">
    <property type="protein sequence ID" value="AAT56042.1"/>
    <property type="molecule type" value="Genomic_DNA"/>
</dbReference>
<dbReference type="RefSeq" id="NP_846269.1">
    <property type="nucleotide sequence ID" value="NC_003997.3"/>
</dbReference>
<dbReference type="RefSeq" id="WP_000018849.1">
    <property type="nucleotide sequence ID" value="NZ_WXXJ01000026.1"/>
</dbReference>
<dbReference type="RefSeq" id="YP_029991.1">
    <property type="nucleotide sequence ID" value="NC_005945.1"/>
</dbReference>
<dbReference type="SMR" id="Q81WE9"/>
<dbReference type="IntAct" id="Q81WE9">
    <property type="interactions" value="5"/>
</dbReference>
<dbReference type="STRING" id="261594.GBAA_4028"/>
<dbReference type="DNASU" id="1086640"/>
<dbReference type="GeneID" id="75087026"/>
<dbReference type="KEGG" id="ban:BA_4028"/>
<dbReference type="KEGG" id="bar:GBAA_4028"/>
<dbReference type="KEGG" id="bat:BAS3740"/>
<dbReference type="PATRIC" id="fig|198094.11.peg.3999"/>
<dbReference type="eggNOG" id="COG0540">
    <property type="taxonomic scope" value="Bacteria"/>
</dbReference>
<dbReference type="HOGENOM" id="CLU_043846_2_1_9"/>
<dbReference type="OMA" id="VLIMHPG"/>
<dbReference type="OrthoDB" id="9774690at2"/>
<dbReference type="UniPathway" id="UPA00070">
    <property type="reaction ID" value="UER00116"/>
</dbReference>
<dbReference type="Proteomes" id="UP000000427">
    <property type="component" value="Chromosome"/>
</dbReference>
<dbReference type="Proteomes" id="UP000000594">
    <property type="component" value="Chromosome"/>
</dbReference>
<dbReference type="GO" id="GO:0005829">
    <property type="term" value="C:cytosol"/>
    <property type="evidence" value="ECO:0007669"/>
    <property type="project" value="TreeGrafter"/>
</dbReference>
<dbReference type="GO" id="GO:0016597">
    <property type="term" value="F:amino acid binding"/>
    <property type="evidence" value="ECO:0007669"/>
    <property type="project" value="InterPro"/>
</dbReference>
<dbReference type="GO" id="GO:0004070">
    <property type="term" value="F:aspartate carbamoyltransferase activity"/>
    <property type="evidence" value="ECO:0007669"/>
    <property type="project" value="UniProtKB-UniRule"/>
</dbReference>
<dbReference type="GO" id="GO:0006207">
    <property type="term" value="P:'de novo' pyrimidine nucleobase biosynthetic process"/>
    <property type="evidence" value="ECO:0007669"/>
    <property type="project" value="InterPro"/>
</dbReference>
<dbReference type="GO" id="GO:0044205">
    <property type="term" value="P:'de novo' UMP biosynthetic process"/>
    <property type="evidence" value="ECO:0007669"/>
    <property type="project" value="UniProtKB-UniRule"/>
</dbReference>
<dbReference type="GO" id="GO:0006520">
    <property type="term" value="P:amino acid metabolic process"/>
    <property type="evidence" value="ECO:0007669"/>
    <property type="project" value="InterPro"/>
</dbReference>
<dbReference type="FunFam" id="3.40.50.1370:FF:000001">
    <property type="entry name" value="Aspartate carbamoyltransferase"/>
    <property type="match status" value="1"/>
</dbReference>
<dbReference type="FunFam" id="3.40.50.1370:FF:000011">
    <property type="entry name" value="Aspartate carbamoyltransferase"/>
    <property type="match status" value="1"/>
</dbReference>
<dbReference type="Gene3D" id="3.40.50.1370">
    <property type="entry name" value="Aspartate/ornithine carbamoyltransferase"/>
    <property type="match status" value="2"/>
</dbReference>
<dbReference type="HAMAP" id="MF_00001">
    <property type="entry name" value="Asp_carb_tr"/>
    <property type="match status" value="1"/>
</dbReference>
<dbReference type="InterPro" id="IPR006132">
    <property type="entry name" value="Asp/Orn_carbamoyltranf_P-bd"/>
</dbReference>
<dbReference type="InterPro" id="IPR006130">
    <property type="entry name" value="Asp/Orn_carbamoylTrfase"/>
</dbReference>
<dbReference type="InterPro" id="IPR036901">
    <property type="entry name" value="Asp/Orn_carbamoylTrfase_sf"/>
</dbReference>
<dbReference type="InterPro" id="IPR002082">
    <property type="entry name" value="Asp_carbamoyltransf"/>
</dbReference>
<dbReference type="InterPro" id="IPR006131">
    <property type="entry name" value="Asp_carbamoyltransf_Asp/Orn-bd"/>
</dbReference>
<dbReference type="NCBIfam" id="TIGR00670">
    <property type="entry name" value="asp_carb_tr"/>
    <property type="match status" value="1"/>
</dbReference>
<dbReference type="NCBIfam" id="NF002032">
    <property type="entry name" value="PRK00856.1"/>
    <property type="match status" value="1"/>
</dbReference>
<dbReference type="PANTHER" id="PTHR45753:SF6">
    <property type="entry name" value="ASPARTATE CARBAMOYLTRANSFERASE"/>
    <property type="match status" value="1"/>
</dbReference>
<dbReference type="PANTHER" id="PTHR45753">
    <property type="entry name" value="ORNITHINE CARBAMOYLTRANSFERASE, MITOCHONDRIAL"/>
    <property type="match status" value="1"/>
</dbReference>
<dbReference type="Pfam" id="PF00185">
    <property type="entry name" value="OTCace"/>
    <property type="match status" value="1"/>
</dbReference>
<dbReference type="Pfam" id="PF02729">
    <property type="entry name" value="OTCace_N"/>
    <property type="match status" value="1"/>
</dbReference>
<dbReference type="PRINTS" id="PR00100">
    <property type="entry name" value="AOTCASE"/>
</dbReference>
<dbReference type="PRINTS" id="PR00101">
    <property type="entry name" value="ATCASE"/>
</dbReference>
<dbReference type="SUPFAM" id="SSF53671">
    <property type="entry name" value="Aspartate/ornithine carbamoyltransferase"/>
    <property type="match status" value="1"/>
</dbReference>
<dbReference type="PROSITE" id="PS00097">
    <property type="entry name" value="CARBAMOYLTRANSFERASE"/>
    <property type="match status" value="1"/>
</dbReference>
<proteinExistence type="inferred from homology"/>